<feature type="chain" id="PRO_1000070314" description="Ribonuclease Z">
    <location>
        <begin position="1"/>
        <end position="314"/>
    </location>
</feature>
<feature type="active site" description="Proton acceptor" evidence="1">
    <location>
        <position position="66"/>
    </location>
</feature>
<feature type="binding site" evidence="1">
    <location>
        <position position="62"/>
    </location>
    <ligand>
        <name>Zn(2+)</name>
        <dbReference type="ChEBI" id="CHEBI:29105"/>
        <label>1</label>
        <note>catalytic</note>
    </ligand>
</feature>
<feature type="binding site" evidence="1">
    <location>
        <position position="64"/>
    </location>
    <ligand>
        <name>Zn(2+)</name>
        <dbReference type="ChEBI" id="CHEBI:29105"/>
        <label>1</label>
        <note>catalytic</note>
    </ligand>
</feature>
<feature type="binding site" evidence="1">
    <location>
        <position position="66"/>
    </location>
    <ligand>
        <name>Zn(2+)</name>
        <dbReference type="ChEBI" id="CHEBI:29105"/>
        <label>2</label>
        <note>catalytic</note>
    </ligand>
</feature>
<feature type="binding site" evidence="1">
    <location>
        <position position="67"/>
    </location>
    <ligand>
        <name>Zn(2+)</name>
        <dbReference type="ChEBI" id="CHEBI:29105"/>
        <label>2</label>
        <note>catalytic</note>
    </ligand>
</feature>
<feature type="binding site" evidence="1">
    <location>
        <position position="144"/>
    </location>
    <ligand>
        <name>Zn(2+)</name>
        <dbReference type="ChEBI" id="CHEBI:29105"/>
        <label>1</label>
        <note>catalytic</note>
    </ligand>
</feature>
<feature type="binding site" evidence="1">
    <location>
        <position position="215"/>
    </location>
    <ligand>
        <name>Zn(2+)</name>
        <dbReference type="ChEBI" id="CHEBI:29105"/>
        <label>1</label>
        <note>catalytic</note>
    </ligand>
</feature>
<feature type="binding site" evidence="1">
    <location>
        <position position="215"/>
    </location>
    <ligand>
        <name>Zn(2+)</name>
        <dbReference type="ChEBI" id="CHEBI:29105"/>
        <label>2</label>
        <note>catalytic</note>
    </ligand>
</feature>
<feature type="binding site" evidence="1">
    <location>
        <position position="273"/>
    </location>
    <ligand>
        <name>Zn(2+)</name>
        <dbReference type="ChEBI" id="CHEBI:29105"/>
        <label>2</label>
        <note>catalytic</note>
    </ligand>
</feature>
<name>RNZ_PROM1</name>
<protein>
    <recommendedName>
        <fullName evidence="1">Ribonuclease Z</fullName>
        <shortName evidence="1">RNase Z</shortName>
        <ecNumber evidence="1">3.1.26.11</ecNumber>
    </recommendedName>
    <alternativeName>
        <fullName evidence="1">tRNA 3 endonuclease</fullName>
    </alternativeName>
    <alternativeName>
        <fullName evidence="1">tRNase Z</fullName>
    </alternativeName>
</protein>
<proteinExistence type="inferred from homology"/>
<reference key="1">
    <citation type="journal article" date="2007" name="PLoS Genet.">
        <title>Patterns and implications of gene gain and loss in the evolution of Prochlorococcus.</title>
        <authorList>
            <person name="Kettler G.C."/>
            <person name="Martiny A.C."/>
            <person name="Huang K."/>
            <person name="Zucker J."/>
            <person name="Coleman M.L."/>
            <person name="Rodrigue S."/>
            <person name="Chen F."/>
            <person name="Lapidus A."/>
            <person name="Ferriera S."/>
            <person name="Johnson J."/>
            <person name="Steglich C."/>
            <person name="Church G.M."/>
            <person name="Richardson P."/>
            <person name="Chisholm S.W."/>
        </authorList>
    </citation>
    <scope>NUCLEOTIDE SEQUENCE [LARGE SCALE GENOMIC DNA]</scope>
    <source>
        <strain>NATL1A</strain>
    </source>
</reference>
<accession>A2C4C2</accession>
<dbReference type="EC" id="3.1.26.11" evidence="1"/>
<dbReference type="EMBL" id="CP000553">
    <property type="protein sequence ID" value="ABM76332.1"/>
    <property type="molecule type" value="Genomic_DNA"/>
</dbReference>
<dbReference type="RefSeq" id="WP_011824326.1">
    <property type="nucleotide sequence ID" value="NC_008819.1"/>
</dbReference>
<dbReference type="SMR" id="A2C4C2"/>
<dbReference type="KEGG" id="pme:NATL1_17761"/>
<dbReference type="eggNOG" id="COG1234">
    <property type="taxonomic scope" value="Bacteria"/>
</dbReference>
<dbReference type="HOGENOM" id="CLU_031317_2_0_3"/>
<dbReference type="Proteomes" id="UP000002592">
    <property type="component" value="Chromosome"/>
</dbReference>
<dbReference type="GO" id="GO:0042781">
    <property type="term" value="F:3'-tRNA processing endoribonuclease activity"/>
    <property type="evidence" value="ECO:0007669"/>
    <property type="project" value="UniProtKB-UniRule"/>
</dbReference>
<dbReference type="GO" id="GO:0008270">
    <property type="term" value="F:zinc ion binding"/>
    <property type="evidence" value="ECO:0007669"/>
    <property type="project" value="UniProtKB-UniRule"/>
</dbReference>
<dbReference type="CDD" id="cd07717">
    <property type="entry name" value="RNaseZ_ZiPD-like_MBL-fold"/>
    <property type="match status" value="1"/>
</dbReference>
<dbReference type="FunFam" id="3.60.15.10:FF:000002">
    <property type="entry name" value="Ribonuclease Z"/>
    <property type="match status" value="1"/>
</dbReference>
<dbReference type="Gene3D" id="3.60.15.10">
    <property type="entry name" value="Ribonuclease Z/Hydroxyacylglutathione hydrolase-like"/>
    <property type="match status" value="1"/>
</dbReference>
<dbReference type="HAMAP" id="MF_01818">
    <property type="entry name" value="RNase_Z_BN"/>
    <property type="match status" value="1"/>
</dbReference>
<dbReference type="InterPro" id="IPR001279">
    <property type="entry name" value="Metallo-B-lactamas"/>
</dbReference>
<dbReference type="InterPro" id="IPR036866">
    <property type="entry name" value="RibonucZ/Hydroxyglut_hydro"/>
</dbReference>
<dbReference type="InterPro" id="IPR013471">
    <property type="entry name" value="RNase_Z/BN"/>
</dbReference>
<dbReference type="NCBIfam" id="NF000801">
    <property type="entry name" value="PRK00055.1-3"/>
    <property type="match status" value="1"/>
</dbReference>
<dbReference type="NCBIfam" id="TIGR02651">
    <property type="entry name" value="RNase_Z"/>
    <property type="match status" value="1"/>
</dbReference>
<dbReference type="PANTHER" id="PTHR46018">
    <property type="entry name" value="ZINC PHOSPHODIESTERASE ELAC PROTEIN 1"/>
    <property type="match status" value="1"/>
</dbReference>
<dbReference type="PANTHER" id="PTHR46018:SF2">
    <property type="entry name" value="ZINC PHOSPHODIESTERASE ELAC PROTEIN 1"/>
    <property type="match status" value="1"/>
</dbReference>
<dbReference type="Pfam" id="PF00753">
    <property type="entry name" value="Lactamase_B"/>
    <property type="match status" value="1"/>
</dbReference>
<dbReference type="Pfam" id="PF12706">
    <property type="entry name" value="Lactamase_B_2"/>
    <property type="match status" value="1"/>
</dbReference>
<dbReference type="SUPFAM" id="SSF56281">
    <property type="entry name" value="Metallo-hydrolase/oxidoreductase"/>
    <property type="match status" value="1"/>
</dbReference>
<organism>
    <name type="scientific">Prochlorococcus marinus (strain NATL1A)</name>
    <dbReference type="NCBI Taxonomy" id="167555"/>
    <lineage>
        <taxon>Bacteria</taxon>
        <taxon>Bacillati</taxon>
        <taxon>Cyanobacteriota</taxon>
        <taxon>Cyanophyceae</taxon>
        <taxon>Synechococcales</taxon>
        <taxon>Prochlorococcaceae</taxon>
        <taxon>Prochlorococcus</taxon>
    </lineage>
</organism>
<keyword id="KW-0255">Endonuclease</keyword>
<keyword id="KW-0378">Hydrolase</keyword>
<keyword id="KW-0479">Metal-binding</keyword>
<keyword id="KW-0540">Nuclease</keyword>
<keyword id="KW-0819">tRNA processing</keyword>
<keyword id="KW-0862">Zinc</keyword>
<comment type="function">
    <text evidence="1">Zinc phosphodiesterase, which displays some tRNA 3'-processing endonuclease activity. Probably involved in tRNA maturation, by removing a 3'-trailer from precursor tRNA.</text>
</comment>
<comment type="catalytic activity">
    <reaction evidence="1">
        <text>Endonucleolytic cleavage of RNA, removing extra 3' nucleotides from tRNA precursor, generating 3' termini of tRNAs. A 3'-hydroxy group is left at the tRNA terminus and a 5'-phosphoryl group is left at the trailer molecule.</text>
        <dbReference type="EC" id="3.1.26.11"/>
    </reaction>
</comment>
<comment type="cofactor">
    <cofactor evidence="1">
        <name>Zn(2+)</name>
        <dbReference type="ChEBI" id="CHEBI:29105"/>
    </cofactor>
    <text evidence="1">Binds 2 Zn(2+) ions.</text>
</comment>
<comment type="subunit">
    <text evidence="1">Homodimer.</text>
</comment>
<comment type="similarity">
    <text evidence="1">Belongs to the RNase Z family.</text>
</comment>
<evidence type="ECO:0000255" key="1">
    <source>
        <dbReference type="HAMAP-Rule" id="MF_01818"/>
    </source>
</evidence>
<gene>
    <name evidence="1" type="primary">rnz</name>
    <name type="ordered locus">NATL1_17761</name>
</gene>
<sequence>MQVTFLGTSSGVPTLNRNVSAMVLKPPQRSELWLFDCGEGTQHQFIRSNLKLSQIKKIFITHMHGDHIYGLPGLLASIGLAGSSSGIELYGPAPLKNFIDSCLYNSSSRLAYSLKFHRVENAANNKEILFEDSELEVKTAPLKHRIPSFAYRVNQKTRPGRFDIEKAKLKGIPPGPVYADLQRGEEVRLEDGRIFSGKEFCGPPRPGVSMVYCTDTVYTESAIEISRKADLLIHESTYSYKETEMAYERGHSTATMAAQIAAKANVDQLILTHLSPRYTPGNQTCPNDLLNEAKAIFPNTQLAKDFLQIDLNKS</sequence>